<proteinExistence type="evidence at transcript level"/>
<comment type="subcellular location">
    <subcellularLocation>
        <location evidence="4">Cell surface</location>
    </subcellularLocation>
</comment>
<comment type="induction">
    <text evidence="3">Expression is down-regulated in macrophages and infected mice.</text>
</comment>
<comment type="disruption phenotype">
    <text evidence="5">Deletion mutant is partially attenuated during murine tuberculosis, but not during the chronic steps of infection. On day 28 post infection, shows a slight reduction of the bacterial burden, but on day 70, bacterial counts of the mutant are similar to the wild-type strain.</text>
</comment>
<comment type="miscellaneous">
    <text evidence="4">Expression of this gene in M.smegmatis leads to low levels of NO and IL-12, increased level of IL-10 and better survival of recombinant strains in macrophages.</text>
</comment>
<comment type="similarity">
    <text evidence="6">Belongs to the mycobacterial PE family. PGRS subfamily.</text>
</comment>
<gene>
    <name evidence="7" type="primary">PE_PGRS26</name>
    <name evidence="7" type="ordered locus">Rv1441c</name>
</gene>
<sequence>MSNVMVVPGMLSAAAADVASIGAALSAANGAAAPTTAGVLAAGADEVSAAIASLFSGYARDYQALSAQMARFHQQFVQALTASVGSYAAAEAANASPLQALEQQVLAAINAPTQTLLGRPLIGNGADGLPGQNGGAGGLLWGNGGNGGAGDAAHPNGGNGGDAGMFGNGGAGGAGYSPAAGTGAAGGAGGAGGAGGWLSGNGGAGGNGGTGASGADGGGGLPPVPASPGGNGGGGDAGGAAGMFGTGGAGGTGGDGGAGGAGDSPNSGANGARGGDGGNGAAGGAGGRLFGNGGAGGNGGTAGQGGDGGTALGAGGIGGDGGTGGAGGTGGTAGIGGSSAGAGGAGGDGGAGGTGGGSSMIGGKGGTGGNGGVGGTGGASALTIGNGSSAGAGGAGGAGGTGGTGGYIESLDGKGQAGNGGNGGNGAAGGAGGGGTGAGGNGGAGGNGGDGGPSQGGGNPGFGGDGGTGGPGGVGVPDGIGGANGAQGKHG</sequence>
<evidence type="ECO:0000255" key="1"/>
<evidence type="ECO:0000256" key="2">
    <source>
        <dbReference type="SAM" id="MobiDB-lite"/>
    </source>
</evidence>
<evidence type="ECO:0000269" key="3">
    <source>
    </source>
</evidence>
<evidence type="ECO:0000269" key="4">
    <source>
    </source>
</evidence>
<evidence type="ECO:0000269" key="5">
    <source>
    </source>
</evidence>
<evidence type="ECO:0000305" key="6"/>
<evidence type="ECO:0000312" key="7">
    <source>
        <dbReference type="EMBL" id="CCP44200.1"/>
    </source>
</evidence>
<protein>
    <recommendedName>
        <fullName evidence="6">PE-PGRS family protein PE_PGRS26</fullName>
    </recommendedName>
</protein>
<keyword id="KW-1185">Reference proteome</keyword>
<organism>
    <name type="scientific">Mycobacterium tuberculosis (strain ATCC 25618 / H37Rv)</name>
    <dbReference type="NCBI Taxonomy" id="83332"/>
    <lineage>
        <taxon>Bacteria</taxon>
        <taxon>Bacillati</taxon>
        <taxon>Actinomycetota</taxon>
        <taxon>Actinomycetes</taxon>
        <taxon>Mycobacteriales</taxon>
        <taxon>Mycobacteriaceae</taxon>
        <taxon>Mycobacterium</taxon>
        <taxon>Mycobacterium tuberculosis complex</taxon>
    </lineage>
</organism>
<reference key="1">
    <citation type="journal article" date="1998" name="Nature">
        <title>Deciphering the biology of Mycobacterium tuberculosis from the complete genome sequence.</title>
        <authorList>
            <person name="Cole S.T."/>
            <person name="Brosch R."/>
            <person name="Parkhill J."/>
            <person name="Garnier T."/>
            <person name="Churcher C.M."/>
            <person name="Harris D.E."/>
            <person name="Gordon S.V."/>
            <person name="Eiglmeier K."/>
            <person name="Gas S."/>
            <person name="Barry C.E. III"/>
            <person name="Tekaia F."/>
            <person name="Badcock K."/>
            <person name="Basham D."/>
            <person name="Brown D."/>
            <person name="Chillingworth T."/>
            <person name="Connor R."/>
            <person name="Davies R.M."/>
            <person name="Devlin K."/>
            <person name="Feltwell T."/>
            <person name="Gentles S."/>
            <person name="Hamlin N."/>
            <person name="Holroyd S."/>
            <person name="Hornsby T."/>
            <person name="Jagels K."/>
            <person name="Krogh A."/>
            <person name="McLean J."/>
            <person name="Moule S."/>
            <person name="Murphy L.D."/>
            <person name="Oliver S."/>
            <person name="Osborne J."/>
            <person name="Quail M.A."/>
            <person name="Rajandream M.A."/>
            <person name="Rogers J."/>
            <person name="Rutter S."/>
            <person name="Seeger K."/>
            <person name="Skelton S."/>
            <person name="Squares S."/>
            <person name="Squares R."/>
            <person name="Sulston J.E."/>
            <person name="Taylor K."/>
            <person name="Whitehead S."/>
            <person name="Barrell B.G."/>
        </authorList>
    </citation>
    <scope>NUCLEOTIDE SEQUENCE [LARGE SCALE GENOMIC DNA]</scope>
    <source>
        <strain>ATCC 25618 / H37Rv</strain>
    </source>
</reference>
<reference key="2">
    <citation type="journal article" date="2006" name="J. Bacteriol.">
        <title>Variable expression patterns of Mycobacterium tuberculosis PE_PGRS genes: evidence that PE_PGRS16 and PE_PGRS26 are inversely regulated in vivo.</title>
        <authorList>
            <person name="Dheenadhayalan V."/>
            <person name="Delogu G."/>
            <person name="Sanguinetti M."/>
            <person name="Fadda G."/>
            <person name="Brennan M.J."/>
        </authorList>
    </citation>
    <scope>INDUCTION</scope>
</reference>
<reference key="3">
    <citation type="journal article" date="2008" name="Microbiology">
        <title>A comparative study of host response to three Mycobacterium tuberculosis PE_PGRS proteins.</title>
        <authorList>
            <person name="Singh P.P."/>
            <person name="Parra M."/>
            <person name="Cadieux N."/>
            <person name="Brennan M.J."/>
        </authorList>
    </citation>
    <scope>SUBCELLULAR LOCATION</scope>
    <scope>EXPRESSION IN M.SMEGMATIS</scope>
</reference>
<reference key="4">
    <citation type="journal article" date="2012" name="Cell. Microbiol.">
        <title>PE_PGRS30 is required for the full virulence of Mycobacterium tuberculosis.</title>
        <authorList>
            <person name="Iantomasi R."/>
            <person name="Sali M."/>
            <person name="Cascioferro A."/>
            <person name="Palucci I."/>
            <person name="Zumbo A."/>
            <person name="Soldini S."/>
            <person name="Rocca S."/>
            <person name="Greco E."/>
            <person name="Maulucci G."/>
            <person name="De Spirito M."/>
            <person name="Fraziano M."/>
            <person name="Fadda G."/>
            <person name="Manganelli R."/>
            <person name="Delogu G."/>
        </authorList>
    </citation>
    <scope>DISRUPTION PHENOTYPE</scope>
    <source>
        <strain>H37Rv</strain>
    </source>
</reference>
<dbReference type="EMBL" id="AL123456">
    <property type="protein sequence ID" value="CCP44200.1"/>
    <property type="molecule type" value="Genomic_DNA"/>
</dbReference>
<dbReference type="RefSeq" id="WP_010886116.1">
    <property type="nucleotide sequence ID" value="NZ_KK339370.1"/>
</dbReference>
<dbReference type="RefSeq" id="YP_177811.1">
    <property type="nucleotide sequence ID" value="NC_000962.3"/>
</dbReference>
<dbReference type="STRING" id="83332.Rv1441c"/>
<dbReference type="PaxDb" id="83332-Rv1441c"/>
<dbReference type="GeneID" id="886626"/>
<dbReference type="KEGG" id="mtu:Rv1441c"/>
<dbReference type="KEGG" id="mtv:RVBD_1441c"/>
<dbReference type="PATRIC" id="fig|83332.111.peg.1602"/>
<dbReference type="TubercuList" id="Rv1441c"/>
<dbReference type="eggNOG" id="COG0657">
    <property type="taxonomic scope" value="Bacteria"/>
</dbReference>
<dbReference type="InParanoid" id="Q79FP3"/>
<dbReference type="OrthoDB" id="4735238at2"/>
<dbReference type="Proteomes" id="UP000001584">
    <property type="component" value="Chromosome"/>
</dbReference>
<dbReference type="GO" id="GO:0009986">
    <property type="term" value="C:cell surface"/>
    <property type="evidence" value="ECO:0007669"/>
    <property type="project" value="UniProtKB-SubCell"/>
</dbReference>
<dbReference type="Gene3D" id="1.10.287.850">
    <property type="entry name" value="HP0062-like domain"/>
    <property type="match status" value="1"/>
</dbReference>
<dbReference type="InterPro" id="IPR000084">
    <property type="entry name" value="PE-PGRS_N"/>
</dbReference>
<dbReference type="InterPro" id="IPR048996">
    <property type="entry name" value="PGRS_rpt"/>
</dbReference>
<dbReference type="Pfam" id="PF00934">
    <property type="entry name" value="PE"/>
    <property type="match status" value="1"/>
</dbReference>
<dbReference type="Pfam" id="PF21526">
    <property type="entry name" value="PGRS"/>
    <property type="match status" value="1"/>
</dbReference>
<dbReference type="PRINTS" id="PR01228">
    <property type="entry name" value="EGGSHELL"/>
</dbReference>
<dbReference type="SUPFAM" id="SSF140459">
    <property type="entry name" value="PE/PPE dimer-like"/>
    <property type="match status" value="1"/>
</dbReference>
<feature type="chain" id="PRO_5004286886" description="PE-PGRS family protein PE_PGRS26">
    <location>
        <begin position="1"/>
        <end position="491"/>
    </location>
</feature>
<feature type="domain" description="PE" evidence="1">
    <location>
        <begin position="1"/>
        <end position="93"/>
    </location>
</feature>
<feature type="region of interest" description="Disordered" evidence="2">
    <location>
        <begin position="207"/>
        <end position="238"/>
    </location>
</feature>
<feature type="region of interest" description="Disordered" evidence="2">
    <location>
        <begin position="255"/>
        <end position="275"/>
    </location>
</feature>
<feature type="region of interest" description="Disordered" evidence="2">
    <location>
        <begin position="444"/>
        <end position="491"/>
    </location>
</feature>
<feature type="compositionally biased region" description="Gly residues" evidence="2">
    <location>
        <begin position="207"/>
        <end position="221"/>
    </location>
</feature>
<feature type="compositionally biased region" description="Gly residues" evidence="2">
    <location>
        <begin position="229"/>
        <end position="238"/>
    </location>
</feature>
<feature type="compositionally biased region" description="Gly residues" evidence="2">
    <location>
        <begin position="444"/>
        <end position="485"/>
    </location>
</feature>
<accession>Q79FP3</accession>
<accession>I6X191</accession>
<accession>L0T898</accession>
<name>PG26_MYCTU</name>